<gene>
    <name type="primary">mdtA</name>
    <name type="synonym">yegM</name>
    <name type="ordered locus">b2074</name>
    <name type="ordered locus">JW5338</name>
</gene>
<sequence>MKGSYKSRWVIVIVVVIAAIAAFWFWQGRNDSRSAAPGATKQAQQSPAGGRRGMRSGPLAPVQAATAVEQAVPRYLTGLGTITAANTVTVRSRVDGQLIALHFQEGQQVKAGDLLAEIDPSQFKVALAQAQGQLAKDKATLANARRDLARYQQLAKTNLVSRQELDAQQALVSETEGTIKADEASVASAQLQLDWSRITAPVDGRVGLKQVDVGNQISSGDTTGIVVITQTHPIDLVFTLPESDIATVVQAQKAGKPLVVEAWDRTNSKKLSEGTLLSLDNQIDATTGTIKVKARFNNQDDALFPNQFVNARMLVDTEQNAVVIPTAALQMGNEGHFVWVLNSENKVSKHLVTPGIQDSQKVVIRAGISAGDRVVTDGIDRLTEGAKVEVVEAQSATTPEEKATSREYAKKGARS</sequence>
<feature type="signal peptide" evidence="1">
    <location>
        <begin position="1"/>
        <end position="21"/>
    </location>
</feature>
<feature type="chain" id="PRO_0000018699" description="Multidrug resistance protein MdtA">
    <location>
        <begin position="22"/>
        <end position="415"/>
    </location>
</feature>
<feature type="region of interest" description="Disordered" evidence="2">
    <location>
        <begin position="32"/>
        <end position="60"/>
    </location>
</feature>
<feature type="region of interest" description="Disordered" evidence="2">
    <location>
        <begin position="392"/>
        <end position="415"/>
    </location>
</feature>
<feature type="compositionally biased region" description="Basic and acidic residues" evidence="2">
    <location>
        <begin position="399"/>
        <end position="415"/>
    </location>
</feature>
<comment type="function">
    <text evidence="3 4">The MdtABC tripartite complex confers resistance against novobiocin and deoxycholate. MdtABC requires TolC for its function.</text>
</comment>
<comment type="subunit">
    <text>Part of a tripartite efflux system composed of MdtA, MdtB and MdtC.</text>
</comment>
<comment type="subcellular location">
    <subcellularLocation>
        <location evidence="5">Cell inner membrane</location>
        <topology evidence="5">Peripheral membrane protein</topology>
    </subcellularLocation>
</comment>
<comment type="induction">
    <text evidence="3 4">The mdtABC operon is transcriptionally activated by BaeR.</text>
</comment>
<comment type="similarity">
    <text evidence="5">Belongs to the membrane fusion protein (MFP) (TC 8.A.1) family.</text>
</comment>
<keyword id="KW-0997">Cell inner membrane</keyword>
<keyword id="KW-1003">Cell membrane</keyword>
<keyword id="KW-0472">Membrane</keyword>
<keyword id="KW-1185">Reference proteome</keyword>
<keyword id="KW-0732">Signal</keyword>
<keyword id="KW-0813">Transport</keyword>
<reference key="1">
    <citation type="journal article" date="2002" name="J. Bacteriol.">
        <title>The putative response regulator BaeR stimulates multidrug resistance of Escherichia coli via a novel multidrug exporter system, MdtABC.</title>
        <authorList>
            <person name="Nagakubo S."/>
            <person name="Nishino K."/>
            <person name="Hirata T."/>
            <person name="Yamaguchi A."/>
        </authorList>
    </citation>
    <scope>NUCLEOTIDE SEQUENCE [GENOMIC DNA]</scope>
    <scope>FUNCTION</scope>
    <scope>INDUCTION</scope>
    <source>
        <strain>K12</strain>
    </source>
</reference>
<reference key="2">
    <citation type="journal article" date="1996" name="DNA Res.">
        <title>A 460-kb DNA sequence of the Escherichia coli K-12 genome corresponding to the 40.1-50.0 min region on the linkage map.</title>
        <authorList>
            <person name="Itoh T."/>
            <person name="Aiba H."/>
            <person name="Baba T."/>
            <person name="Fujita K."/>
            <person name="Hayashi K."/>
            <person name="Inada T."/>
            <person name="Isono K."/>
            <person name="Kasai H."/>
            <person name="Kimura S."/>
            <person name="Kitakawa M."/>
            <person name="Kitagawa M."/>
            <person name="Makino K."/>
            <person name="Miki T."/>
            <person name="Mizobuchi K."/>
            <person name="Mori H."/>
            <person name="Mori T."/>
            <person name="Motomura K."/>
            <person name="Nakade S."/>
            <person name="Nakamura Y."/>
            <person name="Nashimoto H."/>
            <person name="Nishio Y."/>
            <person name="Oshima T."/>
            <person name="Saito N."/>
            <person name="Sampei G."/>
            <person name="Seki Y."/>
            <person name="Sivasundaram S."/>
            <person name="Tagami H."/>
            <person name="Takeda J."/>
            <person name="Takemoto K."/>
            <person name="Wada C."/>
            <person name="Yamamoto Y."/>
            <person name="Horiuchi T."/>
        </authorList>
    </citation>
    <scope>NUCLEOTIDE SEQUENCE [LARGE SCALE GENOMIC DNA]</scope>
    <source>
        <strain>K12 / W3110 / ATCC 27325 / DSM 5911</strain>
    </source>
</reference>
<reference key="3">
    <citation type="journal article" date="1997" name="Science">
        <title>The complete genome sequence of Escherichia coli K-12.</title>
        <authorList>
            <person name="Blattner F.R."/>
            <person name="Plunkett G. III"/>
            <person name="Bloch C.A."/>
            <person name="Perna N.T."/>
            <person name="Burland V."/>
            <person name="Riley M."/>
            <person name="Collado-Vides J."/>
            <person name="Glasner J.D."/>
            <person name="Rode C.K."/>
            <person name="Mayhew G.F."/>
            <person name="Gregor J."/>
            <person name="Davis N.W."/>
            <person name="Kirkpatrick H.A."/>
            <person name="Goeden M.A."/>
            <person name="Rose D.J."/>
            <person name="Mau B."/>
            <person name="Shao Y."/>
        </authorList>
    </citation>
    <scope>NUCLEOTIDE SEQUENCE [LARGE SCALE GENOMIC DNA]</scope>
    <source>
        <strain>K12 / MG1655 / ATCC 47076</strain>
    </source>
</reference>
<reference key="4">
    <citation type="journal article" date="2006" name="Mol. Syst. Biol.">
        <title>Highly accurate genome sequences of Escherichia coli K-12 strains MG1655 and W3110.</title>
        <authorList>
            <person name="Hayashi K."/>
            <person name="Morooka N."/>
            <person name="Yamamoto Y."/>
            <person name="Fujita K."/>
            <person name="Isono K."/>
            <person name="Choi S."/>
            <person name="Ohtsubo E."/>
            <person name="Baba T."/>
            <person name="Wanner B.L."/>
            <person name="Mori H."/>
            <person name="Horiuchi T."/>
        </authorList>
    </citation>
    <scope>NUCLEOTIDE SEQUENCE [LARGE SCALE GENOMIC DNA]</scope>
    <source>
        <strain>K12 / W3110 / ATCC 27325 / DSM 5911</strain>
    </source>
</reference>
<reference key="5">
    <citation type="journal article" date="2002" name="J. Bacteriol.">
        <title>The baeSR two-component regulatory system activates transcription of the yegMNOB (mdtABCD) transporter gene cluster in Escherichia coli and increases its resistance to novobiocin and deoxycholate.</title>
        <authorList>
            <person name="Baranova N."/>
            <person name="Nikaido H."/>
        </authorList>
    </citation>
    <scope>FUNCTION</scope>
    <scope>INDUCTION</scope>
</reference>
<organism>
    <name type="scientific">Escherichia coli (strain K12)</name>
    <dbReference type="NCBI Taxonomy" id="83333"/>
    <lineage>
        <taxon>Bacteria</taxon>
        <taxon>Pseudomonadati</taxon>
        <taxon>Pseudomonadota</taxon>
        <taxon>Gammaproteobacteria</taxon>
        <taxon>Enterobacterales</taxon>
        <taxon>Enterobacteriaceae</taxon>
        <taxon>Escherichia</taxon>
    </lineage>
</organism>
<evidence type="ECO:0000255" key="1"/>
<evidence type="ECO:0000256" key="2">
    <source>
        <dbReference type="SAM" id="MobiDB-lite"/>
    </source>
</evidence>
<evidence type="ECO:0000269" key="3">
    <source>
    </source>
</evidence>
<evidence type="ECO:0000269" key="4">
    <source>
    </source>
</evidence>
<evidence type="ECO:0000305" key="5"/>
<name>MDTA_ECOLI</name>
<accession>P76397</accession>
<proteinExistence type="evidence at transcript level"/>
<dbReference type="EMBL" id="AB089187">
    <property type="protein sequence ID" value="BAC06607.1"/>
    <property type="molecule type" value="Genomic_DNA"/>
</dbReference>
<dbReference type="EMBL" id="U00096">
    <property type="protein sequence ID" value="AAC75135.2"/>
    <property type="molecule type" value="Genomic_DNA"/>
</dbReference>
<dbReference type="EMBL" id="AP009048">
    <property type="protein sequence ID" value="BAA15928.2"/>
    <property type="molecule type" value="Genomic_DNA"/>
</dbReference>
<dbReference type="PIR" id="A64974">
    <property type="entry name" value="A64974"/>
</dbReference>
<dbReference type="RefSeq" id="NP_416578.2">
    <property type="nucleotide sequence ID" value="NC_000913.3"/>
</dbReference>
<dbReference type="RefSeq" id="WP_000678989.1">
    <property type="nucleotide sequence ID" value="NZ_LN832404.1"/>
</dbReference>
<dbReference type="SMR" id="P76397"/>
<dbReference type="BioGRID" id="4260423">
    <property type="interactions" value="142"/>
</dbReference>
<dbReference type="ComplexPortal" id="CPX-2119">
    <property type="entry name" value="MdtABC-TolC multidrug efflux transport complex"/>
</dbReference>
<dbReference type="FunCoup" id="P76397">
    <property type="interactions" value="369"/>
</dbReference>
<dbReference type="STRING" id="511145.b2074"/>
<dbReference type="CARD" id="ARO:3000792">
    <property type="molecule name" value="mdtA"/>
    <property type="mechanism identifier" value="ARO:0010000"/>
    <property type="mechanism name" value="antibiotic efflux"/>
</dbReference>
<dbReference type="TCDB" id="8.A.1.6.2">
    <property type="family name" value="the membrane fusion protein (mfp) family"/>
</dbReference>
<dbReference type="jPOST" id="P76397"/>
<dbReference type="PaxDb" id="511145-b2074"/>
<dbReference type="EnsemblBacteria" id="AAC75135">
    <property type="protein sequence ID" value="AAC75135"/>
    <property type="gene ID" value="b2074"/>
</dbReference>
<dbReference type="GeneID" id="946604"/>
<dbReference type="KEGG" id="ecj:JW5338"/>
<dbReference type="KEGG" id="eco:b2074"/>
<dbReference type="KEGG" id="ecoc:C3026_11665"/>
<dbReference type="PATRIC" id="fig|511145.12.peg.2151"/>
<dbReference type="EchoBASE" id="EB3809"/>
<dbReference type="eggNOG" id="COG0845">
    <property type="taxonomic scope" value="Bacteria"/>
</dbReference>
<dbReference type="HOGENOM" id="CLU_018816_2_0_6"/>
<dbReference type="InParanoid" id="P76397"/>
<dbReference type="OMA" id="GQLMAIH"/>
<dbReference type="OrthoDB" id="9783047at2"/>
<dbReference type="PhylomeDB" id="P76397"/>
<dbReference type="BioCyc" id="EcoCyc:MDTA"/>
<dbReference type="BioCyc" id="MetaCyc:MDTA"/>
<dbReference type="PRO" id="PR:P76397"/>
<dbReference type="Proteomes" id="UP000000625">
    <property type="component" value="Chromosome"/>
</dbReference>
<dbReference type="GO" id="GO:1990281">
    <property type="term" value="C:efflux pump complex"/>
    <property type="evidence" value="ECO:0000318"/>
    <property type="project" value="GO_Central"/>
</dbReference>
<dbReference type="GO" id="GO:0098567">
    <property type="term" value="C:periplasmic side of plasma membrane"/>
    <property type="evidence" value="ECO:0000303"/>
    <property type="project" value="ComplexPortal"/>
</dbReference>
<dbReference type="GO" id="GO:0015125">
    <property type="term" value="F:bile acid transmembrane transporter activity"/>
    <property type="evidence" value="ECO:0000315"/>
    <property type="project" value="EcoCyc"/>
</dbReference>
<dbReference type="GO" id="GO:0015562">
    <property type="term" value="F:efflux transmembrane transporter activity"/>
    <property type="evidence" value="ECO:0000318"/>
    <property type="project" value="GO_Central"/>
</dbReference>
<dbReference type="GO" id="GO:0015721">
    <property type="term" value="P:bile acid and bile salt transport"/>
    <property type="evidence" value="ECO:0000315"/>
    <property type="project" value="EcoCyc"/>
</dbReference>
<dbReference type="GO" id="GO:0140330">
    <property type="term" value="P:xenobiotic detoxification by transmembrane export across the cell outer membrane"/>
    <property type="evidence" value="ECO:0000303"/>
    <property type="project" value="ComplexPortal"/>
</dbReference>
<dbReference type="GO" id="GO:0042908">
    <property type="term" value="P:xenobiotic transport"/>
    <property type="evidence" value="ECO:0000315"/>
    <property type="project" value="EcoCyc"/>
</dbReference>
<dbReference type="FunFam" id="2.40.420.20:FF:000001">
    <property type="entry name" value="Efflux RND transporter periplasmic adaptor subunit"/>
    <property type="match status" value="1"/>
</dbReference>
<dbReference type="FunFam" id="1.10.287.470:FF:000005">
    <property type="entry name" value="Multidrug resistance protein MdtA"/>
    <property type="match status" value="1"/>
</dbReference>
<dbReference type="FunFam" id="2.40.30.170:FF:000006">
    <property type="entry name" value="Multidrug resistance protein MdtA"/>
    <property type="match status" value="1"/>
</dbReference>
<dbReference type="Gene3D" id="2.40.30.170">
    <property type="match status" value="1"/>
</dbReference>
<dbReference type="Gene3D" id="2.40.420.20">
    <property type="match status" value="1"/>
</dbReference>
<dbReference type="Gene3D" id="2.40.50.100">
    <property type="match status" value="1"/>
</dbReference>
<dbReference type="Gene3D" id="1.10.287.470">
    <property type="entry name" value="Helix hairpin bin"/>
    <property type="match status" value="1"/>
</dbReference>
<dbReference type="HAMAP" id="MF_01422">
    <property type="entry name" value="MdtA"/>
    <property type="match status" value="1"/>
</dbReference>
<dbReference type="InterPro" id="IPR032317">
    <property type="entry name" value="CusB_D23"/>
</dbReference>
<dbReference type="InterPro" id="IPR022824">
    <property type="entry name" value="Multidrug-R_MdtA"/>
</dbReference>
<dbReference type="InterPro" id="IPR006143">
    <property type="entry name" value="RND_pump_MFP"/>
</dbReference>
<dbReference type="NCBIfam" id="NF008589">
    <property type="entry name" value="PRK11556.1"/>
    <property type="match status" value="1"/>
</dbReference>
<dbReference type="NCBIfam" id="TIGR01730">
    <property type="entry name" value="RND_mfp"/>
    <property type="match status" value="1"/>
</dbReference>
<dbReference type="PANTHER" id="PTHR30469">
    <property type="entry name" value="MULTIDRUG RESISTANCE PROTEIN MDTA"/>
    <property type="match status" value="1"/>
</dbReference>
<dbReference type="PANTHER" id="PTHR30469:SF12">
    <property type="entry name" value="MULTIDRUG RESISTANCE PROTEIN MDTA"/>
    <property type="match status" value="1"/>
</dbReference>
<dbReference type="Pfam" id="PF16576">
    <property type="entry name" value="HlyD_D23"/>
    <property type="match status" value="1"/>
</dbReference>
<dbReference type="SUPFAM" id="SSF111369">
    <property type="entry name" value="HlyD-like secretion proteins"/>
    <property type="match status" value="1"/>
</dbReference>
<protein>
    <recommendedName>
        <fullName>Multidrug resistance protein MdtA</fullName>
    </recommendedName>
    <alternativeName>
        <fullName>Multidrug transporter MdtA</fullName>
    </alternativeName>
</protein>